<organism>
    <name type="scientific">Pseudomonas putida (strain W619)</name>
    <dbReference type="NCBI Taxonomy" id="390235"/>
    <lineage>
        <taxon>Bacteria</taxon>
        <taxon>Pseudomonadati</taxon>
        <taxon>Pseudomonadota</taxon>
        <taxon>Gammaproteobacteria</taxon>
        <taxon>Pseudomonadales</taxon>
        <taxon>Pseudomonadaceae</taxon>
        <taxon>Pseudomonas</taxon>
    </lineage>
</organism>
<name>KDSB_PSEPW</name>
<evidence type="ECO:0000255" key="1">
    <source>
        <dbReference type="HAMAP-Rule" id="MF_00057"/>
    </source>
</evidence>
<feature type="chain" id="PRO_1000091893" description="3-deoxy-manno-octulosonate cytidylyltransferase">
    <location>
        <begin position="1"/>
        <end position="254"/>
    </location>
</feature>
<comment type="function">
    <text evidence="1">Activates KDO (a required 8-carbon sugar) for incorporation into bacterial lipopolysaccharide in Gram-negative bacteria.</text>
</comment>
<comment type="catalytic activity">
    <reaction evidence="1">
        <text>3-deoxy-alpha-D-manno-oct-2-ulosonate + CTP = CMP-3-deoxy-beta-D-manno-octulosonate + diphosphate</text>
        <dbReference type="Rhea" id="RHEA:23448"/>
        <dbReference type="ChEBI" id="CHEBI:33019"/>
        <dbReference type="ChEBI" id="CHEBI:37563"/>
        <dbReference type="ChEBI" id="CHEBI:85986"/>
        <dbReference type="ChEBI" id="CHEBI:85987"/>
        <dbReference type="EC" id="2.7.7.38"/>
    </reaction>
</comment>
<comment type="pathway">
    <text evidence="1">Nucleotide-sugar biosynthesis; CMP-3-deoxy-D-manno-octulosonate biosynthesis; CMP-3-deoxy-D-manno-octulosonate from 3-deoxy-D-manno-octulosonate and CTP: step 1/1.</text>
</comment>
<comment type="pathway">
    <text evidence="1">Bacterial outer membrane biogenesis; lipopolysaccharide biosynthesis.</text>
</comment>
<comment type="subcellular location">
    <subcellularLocation>
        <location evidence="1">Cytoplasm</location>
    </subcellularLocation>
</comment>
<comment type="similarity">
    <text evidence="1">Belongs to the KdsB family.</text>
</comment>
<reference key="1">
    <citation type="submission" date="2008-02" db="EMBL/GenBank/DDBJ databases">
        <title>Complete sequence of Pseudomonas putida W619.</title>
        <authorList>
            <person name="Copeland A."/>
            <person name="Lucas S."/>
            <person name="Lapidus A."/>
            <person name="Barry K."/>
            <person name="Detter J.C."/>
            <person name="Glavina del Rio T."/>
            <person name="Dalin E."/>
            <person name="Tice H."/>
            <person name="Pitluck S."/>
            <person name="Chain P."/>
            <person name="Malfatti S."/>
            <person name="Shin M."/>
            <person name="Vergez L."/>
            <person name="Schmutz J."/>
            <person name="Larimer F."/>
            <person name="Land M."/>
            <person name="Hauser L."/>
            <person name="Kyrpides N."/>
            <person name="Kim E."/>
            <person name="Taghavi S."/>
            <person name="Vangronsveld D."/>
            <person name="van der Lelie D."/>
            <person name="Richardson P."/>
        </authorList>
    </citation>
    <scope>NUCLEOTIDE SEQUENCE [LARGE SCALE GENOMIC DNA]</scope>
    <source>
        <strain>W619</strain>
    </source>
</reference>
<accession>B1J508</accession>
<proteinExistence type="inferred from homology"/>
<dbReference type="EC" id="2.7.7.38" evidence="1"/>
<dbReference type="EMBL" id="CP000949">
    <property type="protein sequence ID" value="ACA72018.1"/>
    <property type="molecule type" value="Genomic_DNA"/>
</dbReference>
<dbReference type="SMR" id="B1J508"/>
<dbReference type="STRING" id="390235.PputW619_1513"/>
<dbReference type="KEGG" id="ppw:PputW619_1513"/>
<dbReference type="eggNOG" id="COG1212">
    <property type="taxonomic scope" value="Bacteria"/>
</dbReference>
<dbReference type="HOGENOM" id="CLU_065038_1_0_6"/>
<dbReference type="OrthoDB" id="9815559at2"/>
<dbReference type="UniPathway" id="UPA00030"/>
<dbReference type="UniPathway" id="UPA00358">
    <property type="reaction ID" value="UER00476"/>
</dbReference>
<dbReference type="GO" id="GO:0005829">
    <property type="term" value="C:cytosol"/>
    <property type="evidence" value="ECO:0007669"/>
    <property type="project" value="TreeGrafter"/>
</dbReference>
<dbReference type="GO" id="GO:0008690">
    <property type="term" value="F:3-deoxy-manno-octulosonate cytidylyltransferase activity"/>
    <property type="evidence" value="ECO:0007669"/>
    <property type="project" value="UniProtKB-UniRule"/>
</dbReference>
<dbReference type="GO" id="GO:0033468">
    <property type="term" value="P:CMP-keto-3-deoxy-D-manno-octulosonic acid biosynthetic process"/>
    <property type="evidence" value="ECO:0007669"/>
    <property type="project" value="UniProtKB-UniRule"/>
</dbReference>
<dbReference type="GO" id="GO:0009103">
    <property type="term" value="P:lipopolysaccharide biosynthetic process"/>
    <property type="evidence" value="ECO:0007669"/>
    <property type="project" value="UniProtKB-UniRule"/>
</dbReference>
<dbReference type="CDD" id="cd02517">
    <property type="entry name" value="CMP-KDO-Synthetase"/>
    <property type="match status" value="1"/>
</dbReference>
<dbReference type="FunFam" id="3.90.550.10:FF:000011">
    <property type="entry name" value="3-deoxy-manno-octulosonate cytidylyltransferase"/>
    <property type="match status" value="1"/>
</dbReference>
<dbReference type="Gene3D" id="3.90.550.10">
    <property type="entry name" value="Spore Coat Polysaccharide Biosynthesis Protein SpsA, Chain A"/>
    <property type="match status" value="1"/>
</dbReference>
<dbReference type="HAMAP" id="MF_00057">
    <property type="entry name" value="KdsB"/>
    <property type="match status" value="1"/>
</dbReference>
<dbReference type="InterPro" id="IPR003329">
    <property type="entry name" value="Cytidylyl_trans"/>
</dbReference>
<dbReference type="InterPro" id="IPR004528">
    <property type="entry name" value="KdsB"/>
</dbReference>
<dbReference type="InterPro" id="IPR029044">
    <property type="entry name" value="Nucleotide-diphossugar_trans"/>
</dbReference>
<dbReference type="NCBIfam" id="TIGR00466">
    <property type="entry name" value="kdsB"/>
    <property type="match status" value="1"/>
</dbReference>
<dbReference type="NCBIfam" id="NF003950">
    <property type="entry name" value="PRK05450.1-3"/>
    <property type="match status" value="1"/>
</dbReference>
<dbReference type="NCBIfam" id="NF003952">
    <property type="entry name" value="PRK05450.1-5"/>
    <property type="match status" value="1"/>
</dbReference>
<dbReference type="NCBIfam" id="NF009905">
    <property type="entry name" value="PRK13368.1"/>
    <property type="match status" value="1"/>
</dbReference>
<dbReference type="PANTHER" id="PTHR42866">
    <property type="entry name" value="3-DEOXY-MANNO-OCTULOSONATE CYTIDYLYLTRANSFERASE"/>
    <property type="match status" value="1"/>
</dbReference>
<dbReference type="PANTHER" id="PTHR42866:SF2">
    <property type="entry name" value="3-DEOXY-MANNO-OCTULOSONATE CYTIDYLYLTRANSFERASE, MITOCHONDRIAL"/>
    <property type="match status" value="1"/>
</dbReference>
<dbReference type="Pfam" id="PF02348">
    <property type="entry name" value="CTP_transf_3"/>
    <property type="match status" value="1"/>
</dbReference>
<dbReference type="SUPFAM" id="SSF53448">
    <property type="entry name" value="Nucleotide-diphospho-sugar transferases"/>
    <property type="match status" value="1"/>
</dbReference>
<keyword id="KW-0963">Cytoplasm</keyword>
<keyword id="KW-0448">Lipopolysaccharide biosynthesis</keyword>
<keyword id="KW-0548">Nucleotidyltransferase</keyword>
<keyword id="KW-0808">Transferase</keyword>
<sequence length="254" mass="27603">MSLDFTVVIPARLRSTRLPGKPLLLIAGKPMVQHVWEQARKSGAGRVVIATDDASIVEACQAFGAEVLMTRADHESGTDRLAEVAAQLGLPADAIVVNVQGDEPLIPPVIIDQVAANLAAHPEAGIATLAEPIHDPETVFNPNAVKVVSDKNGLALSFSRAPLPWARDAFAKDRNQLPQGVPYRRHIGMYAYRVGFLQDFVSWGPCWLEQTEALEQLRALWHGVRIHVADAIEAPAVGVDTAQDLERVRRLLEA</sequence>
<gene>
    <name evidence="1" type="primary">kdsB</name>
    <name type="ordered locus">PputW619_1513</name>
</gene>
<protein>
    <recommendedName>
        <fullName evidence="1">3-deoxy-manno-octulosonate cytidylyltransferase</fullName>
        <ecNumber evidence="1">2.7.7.38</ecNumber>
    </recommendedName>
    <alternativeName>
        <fullName evidence="1">CMP-2-keto-3-deoxyoctulosonic acid synthase</fullName>
        <shortName evidence="1">CKS</shortName>
        <shortName evidence="1">CMP-KDO synthase</shortName>
    </alternativeName>
</protein>